<gene>
    <name type="primary">colec10</name>
</gene>
<organism>
    <name type="scientific">Xenopus tropicalis</name>
    <name type="common">Western clawed frog</name>
    <name type="synonym">Silurana tropicalis</name>
    <dbReference type="NCBI Taxonomy" id="8364"/>
    <lineage>
        <taxon>Eukaryota</taxon>
        <taxon>Metazoa</taxon>
        <taxon>Chordata</taxon>
        <taxon>Craniata</taxon>
        <taxon>Vertebrata</taxon>
        <taxon>Euteleostomi</taxon>
        <taxon>Amphibia</taxon>
        <taxon>Batrachia</taxon>
        <taxon>Anura</taxon>
        <taxon>Pipoidea</taxon>
        <taxon>Pipidae</taxon>
        <taxon>Xenopodinae</taxon>
        <taxon>Xenopus</taxon>
        <taxon>Silurana</taxon>
    </lineage>
</organism>
<feature type="signal peptide" evidence="2">
    <location>
        <begin position="1"/>
        <end position="25"/>
    </location>
</feature>
<feature type="chain" id="PRO_0000314236" description="Collectin-10">
    <location>
        <begin position="26"/>
        <end position="275"/>
    </location>
</feature>
<feature type="domain" description="Collagen-like">
    <location>
        <begin position="51"/>
        <end position="110"/>
    </location>
</feature>
<feature type="domain" description="C-type lectin" evidence="3">
    <location>
        <begin position="153"/>
        <end position="269"/>
    </location>
</feature>
<feature type="region of interest" description="Disordered" evidence="4">
    <location>
        <begin position="39"/>
        <end position="76"/>
    </location>
</feature>
<feature type="glycosylation site" description="N-linked (GlcNAc...) asparagine" evidence="2">
    <location>
        <position position="30"/>
    </location>
</feature>
<feature type="disulfide bond" evidence="3">
    <location>
        <begin position="174"/>
        <end position="268"/>
    </location>
</feature>
<feature type="disulfide bond" evidence="3">
    <location>
        <begin position="246"/>
        <end position="260"/>
    </location>
</feature>
<protein>
    <recommendedName>
        <fullName>Collectin-10</fullName>
    </recommendedName>
</protein>
<keyword id="KW-0106">Calcium</keyword>
<keyword id="KW-0176">Collagen</keyword>
<keyword id="KW-1015">Disulfide bond</keyword>
<keyword id="KW-0325">Glycoprotein</keyword>
<keyword id="KW-0430">Lectin</keyword>
<keyword id="KW-0465">Mannose-binding</keyword>
<keyword id="KW-1185">Reference proteome</keyword>
<keyword id="KW-0964">Secreted</keyword>
<keyword id="KW-0732">Signal</keyword>
<name>COL10_XENTR</name>
<comment type="function">
    <text evidence="1">Lectin that binds to various sugars: galactose &gt; mannose = fucose &gt; N-acetylglucosamine &gt; N-acetylgalactosamine.</text>
</comment>
<comment type="subcellular location">
    <subcellularLocation>
        <location>Secreted</location>
    </subcellularLocation>
</comment>
<comment type="similarity">
    <text evidence="5">Belongs to the COLEC10/COLEC11 family.</text>
</comment>
<proteinExistence type="evidence at transcript level"/>
<dbReference type="EMBL" id="BC087791">
    <property type="protein sequence ID" value="AAH87791.1"/>
    <property type="molecule type" value="mRNA"/>
</dbReference>
<dbReference type="RefSeq" id="NP_001011227.1">
    <property type="nucleotide sequence ID" value="NM_001011227.1"/>
</dbReference>
<dbReference type="SMR" id="Q5M8X6"/>
<dbReference type="FunCoup" id="Q5M8X6">
    <property type="interactions" value="22"/>
</dbReference>
<dbReference type="STRING" id="8364.ENSXETP00000033873"/>
<dbReference type="GlyCosmos" id="Q5M8X6">
    <property type="glycosylation" value="1 site, No reported glycans"/>
</dbReference>
<dbReference type="PaxDb" id="8364-ENSXETP00000060074"/>
<dbReference type="DNASU" id="496663"/>
<dbReference type="GeneID" id="496663"/>
<dbReference type="KEGG" id="xtr:496663"/>
<dbReference type="AGR" id="Xenbase:XB-GENE-945586"/>
<dbReference type="CTD" id="10584"/>
<dbReference type="Xenbase" id="XB-GENE-945586">
    <property type="gene designation" value="colec10"/>
</dbReference>
<dbReference type="eggNOG" id="KOG4297">
    <property type="taxonomic scope" value="Eukaryota"/>
</dbReference>
<dbReference type="HOGENOM" id="CLU_049894_3_2_1"/>
<dbReference type="InParanoid" id="Q5M8X6"/>
<dbReference type="OMA" id="FICEFLK"/>
<dbReference type="OrthoDB" id="8066719at2759"/>
<dbReference type="PhylomeDB" id="Q5M8X6"/>
<dbReference type="Proteomes" id="UP000008143">
    <property type="component" value="Chromosome 6"/>
</dbReference>
<dbReference type="ExpressionAtlas" id="Q5M8X6">
    <property type="expression patterns" value="baseline and differential"/>
</dbReference>
<dbReference type="GO" id="GO:0005581">
    <property type="term" value="C:collagen trimer"/>
    <property type="evidence" value="ECO:0007669"/>
    <property type="project" value="UniProtKB-KW"/>
</dbReference>
<dbReference type="GO" id="GO:0005576">
    <property type="term" value="C:extracellular region"/>
    <property type="evidence" value="ECO:0007669"/>
    <property type="project" value="UniProtKB-SubCell"/>
</dbReference>
<dbReference type="GO" id="GO:0005537">
    <property type="term" value="F:D-mannose binding"/>
    <property type="evidence" value="ECO:0007669"/>
    <property type="project" value="UniProtKB-KW"/>
</dbReference>
<dbReference type="CDD" id="cd03591">
    <property type="entry name" value="CLECT_collectin_like"/>
    <property type="match status" value="1"/>
</dbReference>
<dbReference type="FunFam" id="3.10.100.10:FF:000005">
    <property type="entry name" value="collectin-11 isoform X1"/>
    <property type="match status" value="1"/>
</dbReference>
<dbReference type="Gene3D" id="3.10.100.10">
    <property type="entry name" value="Mannose-Binding Protein A, subunit A"/>
    <property type="match status" value="1"/>
</dbReference>
<dbReference type="InterPro" id="IPR001304">
    <property type="entry name" value="C-type_lectin-like"/>
</dbReference>
<dbReference type="InterPro" id="IPR016186">
    <property type="entry name" value="C-type_lectin-like/link_sf"/>
</dbReference>
<dbReference type="InterPro" id="IPR018378">
    <property type="entry name" value="C-type_lectin_CS"/>
</dbReference>
<dbReference type="InterPro" id="IPR051663">
    <property type="entry name" value="CLec_Tetranectin-domain"/>
</dbReference>
<dbReference type="InterPro" id="IPR008160">
    <property type="entry name" value="Collagen"/>
</dbReference>
<dbReference type="InterPro" id="IPR033990">
    <property type="entry name" value="Collectin_CTLD"/>
</dbReference>
<dbReference type="InterPro" id="IPR016187">
    <property type="entry name" value="CTDL_fold"/>
</dbReference>
<dbReference type="PANTHER" id="PTHR22799:SF1">
    <property type="entry name" value="C-TYPE LECTIN DOMAIN FAMILY 11 MEMBER A"/>
    <property type="match status" value="1"/>
</dbReference>
<dbReference type="PANTHER" id="PTHR22799">
    <property type="entry name" value="TETRANECTIN-RELATED"/>
    <property type="match status" value="1"/>
</dbReference>
<dbReference type="Pfam" id="PF01391">
    <property type="entry name" value="Collagen"/>
    <property type="match status" value="2"/>
</dbReference>
<dbReference type="Pfam" id="PF00059">
    <property type="entry name" value="Lectin_C"/>
    <property type="match status" value="1"/>
</dbReference>
<dbReference type="SMART" id="SM00034">
    <property type="entry name" value="CLECT"/>
    <property type="match status" value="1"/>
</dbReference>
<dbReference type="SUPFAM" id="SSF56436">
    <property type="entry name" value="C-type lectin-like"/>
    <property type="match status" value="1"/>
</dbReference>
<dbReference type="PROSITE" id="PS00615">
    <property type="entry name" value="C_TYPE_LECTIN_1"/>
    <property type="match status" value="1"/>
</dbReference>
<dbReference type="PROSITE" id="PS50041">
    <property type="entry name" value="C_TYPE_LECTIN_2"/>
    <property type="match status" value="1"/>
</dbReference>
<reference key="1">
    <citation type="submission" date="2004-12" db="EMBL/GenBank/DDBJ databases">
        <authorList>
            <consortium name="NIH - Xenopus Gene Collection (XGC) project"/>
        </authorList>
    </citation>
    <scope>NUCLEOTIDE SEQUENCE [LARGE SCALE MRNA]</scope>
</reference>
<evidence type="ECO:0000250" key="1"/>
<evidence type="ECO:0000255" key="2"/>
<evidence type="ECO:0000255" key="3">
    <source>
        <dbReference type="PROSITE-ProRule" id="PRU00040"/>
    </source>
</evidence>
<evidence type="ECO:0000256" key="4">
    <source>
        <dbReference type="SAM" id="MobiDB-lite"/>
    </source>
</evidence>
<evidence type="ECO:0000305" key="5"/>
<sequence>MKYGKLWPIGVSVLGVIALHVRVLSLEVENSSAVDTCSTHTILPGPKGDDGEAGDTGVLGKLGKDGPKGQKGNKGIIGDSGDLGLIGKIGPIGSKGDKGHKGLPGLPGGKGKSGSYCDCGRYRKVVGQLDVNVAHLKSSLKFVKNVIAGIRETDEKYYYIVREERNYRDALTQCRIRGGTLAMPKDQATNSLIADYISKMGLFRVFIGINDIEKEKQFVYADNSPLQTYSSWKAGEPNDGSGYEDCVEMLSTGHWNDVDCSLTIYFVCEFLKKTK</sequence>
<accession>Q5M8X6</accession>